<keyword id="KW-1003">Cell membrane</keyword>
<keyword id="KW-1015">Disulfide bond</keyword>
<keyword id="KW-0325">Glycoprotein</keyword>
<keyword id="KW-0378">Hydrolase</keyword>
<keyword id="KW-0472">Membrane</keyword>
<keyword id="KW-0531">Neurotransmitter degradation</keyword>
<keyword id="KW-1185">Reference proteome</keyword>
<keyword id="KW-0964">Secreted</keyword>
<keyword id="KW-0719">Serine esterase</keyword>
<keyword id="KW-0732">Signal</keyword>
<keyword id="KW-0770">Synapse</keyword>
<accession>Q29499</accession>
<sequence length="584" mass="64630">AEGREDPELLVTVRGGRLRGLRLKAPGGPVSAFLGIPFEEPPVGPRRFLPPEPKRPWAGVLDATAFQSVCYQYVDTLYPGFEGTEMWNPNRELSEDCLYLNVWTPYPRPTSPTPVLVWIYGGGFYSGASSLDVYYGRFLVQAEGTVLVAMNYRVGAFGFTCLPGSREAPGNVGLLDQRLALQWVQENVAAFGGDPASVTLFGESAGAASVGLHLLSPPSRGLFHRAVLQSGAPNGPWATVGVGEARRRATLLARLVVCPPGGAGGNDTELVACLRTRPAQDLVDHEWRVLPQESIFRFSFVPVVDGDFLSDTPEALINAGDFQGLQVLVGVVKDEGTYFLVYGAPGFSKDNESFISRAQFLAGVRVGVPQASDLAAEAVVLHYTDWLHPEDPARLRDALSDVVGDHNVVCPVAQLAGRLAAQGARVYAYVFEHRASTLSWPLWMGVPHGYEIEFIFGLPLEPSLNYTEEERIFAQRLMRYWANFARTGDPNEPRDAKAPQWPPYTAGAQQYVSLNLRPLEVRRGLRAQACAFWNRFLPKLLSATDTLDEAERQWKAEFHRWSSYMVHWKNQFDHYSKQDRCSDL</sequence>
<reference key="1">
    <citation type="journal article" date="1994" name="Eur. J. Biochem.">
        <title>Acetylcholinesterase and butyrylcholinesterase expression in adult rabbit tissues and during development.</title>
        <authorList>
            <person name="Jbilo O."/>
            <person name="L'Hermite Y."/>
            <person name="Talesa V."/>
            <person name="Toutant J.-P."/>
            <person name="Chatonnet A."/>
        </authorList>
    </citation>
    <scope>NUCLEOTIDE SEQUENCE [MRNA]</scope>
    <source>
        <tissue>Muscle</tissue>
    </source>
</reference>
<dbReference type="EC" id="3.1.1.7"/>
<dbReference type="EMBL" id="U05036">
    <property type="protein sequence ID" value="AAA53235.1"/>
    <property type="molecule type" value="mRNA"/>
</dbReference>
<dbReference type="PIR" id="S48724">
    <property type="entry name" value="S48724"/>
</dbReference>
<dbReference type="SMR" id="Q29499"/>
<dbReference type="FunCoup" id="Q29499">
    <property type="interactions" value="38"/>
</dbReference>
<dbReference type="ESTHER" id="rabit-ACHE">
    <property type="family name" value="ACHE"/>
</dbReference>
<dbReference type="MEROPS" id="S09.979"/>
<dbReference type="GlyCosmos" id="Q29499">
    <property type="glycosylation" value="3 sites, No reported glycans"/>
</dbReference>
<dbReference type="InParanoid" id="Q29499"/>
<dbReference type="Proteomes" id="UP000001811">
    <property type="component" value="Unplaced"/>
</dbReference>
<dbReference type="GO" id="GO:0005615">
    <property type="term" value="C:extracellular space"/>
    <property type="evidence" value="ECO:0007669"/>
    <property type="project" value="TreeGrafter"/>
</dbReference>
<dbReference type="GO" id="GO:0005886">
    <property type="term" value="C:plasma membrane"/>
    <property type="evidence" value="ECO:0007669"/>
    <property type="project" value="UniProtKB-SubCell"/>
</dbReference>
<dbReference type="GO" id="GO:0045202">
    <property type="term" value="C:synapse"/>
    <property type="evidence" value="ECO:0007669"/>
    <property type="project" value="UniProtKB-SubCell"/>
</dbReference>
<dbReference type="GO" id="GO:0003990">
    <property type="term" value="F:acetylcholinesterase activity"/>
    <property type="evidence" value="ECO:0007669"/>
    <property type="project" value="UniProtKB-EC"/>
</dbReference>
<dbReference type="GO" id="GO:0006581">
    <property type="term" value="P:acetylcholine catabolic process"/>
    <property type="evidence" value="ECO:0007669"/>
    <property type="project" value="TreeGrafter"/>
</dbReference>
<dbReference type="GO" id="GO:0019695">
    <property type="term" value="P:choline metabolic process"/>
    <property type="evidence" value="ECO:0007669"/>
    <property type="project" value="TreeGrafter"/>
</dbReference>
<dbReference type="CDD" id="cd00312">
    <property type="entry name" value="Esterase_lipase"/>
    <property type="match status" value="1"/>
</dbReference>
<dbReference type="FunFam" id="3.40.50.1820:FF:000029">
    <property type="entry name" value="Acetylcholinesterase"/>
    <property type="match status" value="1"/>
</dbReference>
<dbReference type="Gene3D" id="3.40.50.1820">
    <property type="entry name" value="alpha/beta hydrolase"/>
    <property type="match status" value="1"/>
</dbReference>
<dbReference type="InterPro" id="IPR029058">
    <property type="entry name" value="AB_hydrolase_fold"/>
</dbReference>
<dbReference type="InterPro" id="IPR050654">
    <property type="entry name" value="AChE-related_enzymes"/>
</dbReference>
<dbReference type="InterPro" id="IPR014788">
    <property type="entry name" value="AChE_tetra"/>
</dbReference>
<dbReference type="InterPro" id="IPR002018">
    <property type="entry name" value="CarbesteraseB"/>
</dbReference>
<dbReference type="InterPro" id="IPR019826">
    <property type="entry name" value="Carboxylesterase_B_AS"/>
</dbReference>
<dbReference type="InterPro" id="IPR019819">
    <property type="entry name" value="Carboxylesterase_B_CS"/>
</dbReference>
<dbReference type="InterPro" id="IPR000997">
    <property type="entry name" value="Cholinesterase"/>
</dbReference>
<dbReference type="PANTHER" id="PTHR43918">
    <property type="entry name" value="ACETYLCHOLINESTERASE"/>
    <property type="match status" value="1"/>
</dbReference>
<dbReference type="PANTHER" id="PTHR43918:SF11">
    <property type="entry name" value="ACETYLCHOLINESTERASE"/>
    <property type="match status" value="1"/>
</dbReference>
<dbReference type="Pfam" id="PF08674">
    <property type="entry name" value="AChE_tetra"/>
    <property type="match status" value="1"/>
</dbReference>
<dbReference type="Pfam" id="PF00135">
    <property type="entry name" value="COesterase"/>
    <property type="match status" value="1"/>
</dbReference>
<dbReference type="PRINTS" id="PR00878">
    <property type="entry name" value="CHOLNESTRASE"/>
</dbReference>
<dbReference type="SUPFAM" id="SSF53474">
    <property type="entry name" value="alpha/beta-Hydrolases"/>
    <property type="match status" value="1"/>
</dbReference>
<dbReference type="PROSITE" id="PS00122">
    <property type="entry name" value="CARBOXYLESTERASE_B_1"/>
    <property type="match status" value="1"/>
</dbReference>
<dbReference type="PROSITE" id="PS00941">
    <property type="entry name" value="CARBOXYLESTERASE_B_2"/>
    <property type="match status" value="1"/>
</dbReference>
<name>ACES_RABIT</name>
<feature type="signal peptide" evidence="2">
    <location>
        <begin position="1" status="less than"/>
        <end position="1"/>
    </location>
</feature>
<feature type="chain" id="PRO_0000008589" description="Acetylcholinesterase">
    <location>
        <begin position="2"/>
        <end position="584"/>
    </location>
</feature>
<feature type="active site" description="Acyl-ester intermediate" evidence="3">
    <location>
        <position position="204"/>
    </location>
</feature>
<feature type="active site" description="Charge relay system" evidence="1">
    <location>
        <position position="335"/>
    </location>
</feature>
<feature type="active site" description="Charge relay system" evidence="1">
    <location>
        <position position="448"/>
    </location>
</feature>
<feature type="glycosylation site" description="N-linked (GlcNAc...) asparagine" evidence="2">
    <location>
        <position position="266"/>
    </location>
</feature>
<feature type="glycosylation site" description="N-linked (GlcNAc...) asparagine" evidence="2">
    <location>
        <position position="351"/>
    </location>
</feature>
<feature type="glycosylation site" description="N-linked (GlcNAc...) asparagine" evidence="2">
    <location>
        <position position="465"/>
    </location>
</feature>
<feature type="disulfide bond" evidence="1">
    <location>
        <begin position="70"/>
        <end position="97"/>
    </location>
</feature>
<feature type="disulfide bond" evidence="1">
    <location>
        <begin position="258"/>
        <end position="273"/>
    </location>
</feature>
<feature type="disulfide bond" evidence="1">
    <location>
        <begin position="410"/>
        <end position="530"/>
    </location>
</feature>
<feature type="disulfide bond" description="Interchain" evidence="1">
    <location>
        <position position="581"/>
    </location>
</feature>
<feature type="non-terminal residue">
    <location>
        <position position="1"/>
    </location>
</feature>
<proteinExistence type="evidence at transcript level"/>
<gene>
    <name type="primary">ACHE</name>
</gene>
<organism>
    <name type="scientific">Oryctolagus cuniculus</name>
    <name type="common">Rabbit</name>
    <dbReference type="NCBI Taxonomy" id="9986"/>
    <lineage>
        <taxon>Eukaryota</taxon>
        <taxon>Metazoa</taxon>
        <taxon>Chordata</taxon>
        <taxon>Craniata</taxon>
        <taxon>Vertebrata</taxon>
        <taxon>Euteleostomi</taxon>
        <taxon>Mammalia</taxon>
        <taxon>Eutheria</taxon>
        <taxon>Euarchontoglires</taxon>
        <taxon>Glires</taxon>
        <taxon>Lagomorpha</taxon>
        <taxon>Leporidae</taxon>
        <taxon>Oryctolagus</taxon>
    </lineage>
</organism>
<comment type="function">
    <text>Terminates signal transduction at the neuromuscular junction by rapid hydrolysis of the acetylcholine released into the synaptic cleft.</text>
</comment>
<comment type="catalytic activity">
    <reaction>
        <text>acetylcholine + H2O = choline + acetate + H(+)</text>
        <dbReference type="Rhea" id="RHEA:17561"/>
        <dbReference type="ChEBI" id="CHEBI:15354"/>
        <dbReference type="ChEBI" id="CHEBI:15355"/>
        <dbReference type="ChEBI" id="CHEBI:15377"/>
        <dbReference type="ChEBI" id="CHEBI:15378"/>
        <dbReference type="ChEBI" id="CHEBI:30089"/>
        <dbReference type="EC" id="3.1.1.7"/>
    </reaction>
</comment>
<comment type="subunit">
    <text evidence="1">Homotetramer; composed of disulfide-linked homodimers. Interacts with PRIMA1. The interaction with PRIMA1 is required to anchor it to the basal lamina of cells and organize into tetramers (By similarity).</text>
</comment>
<comment type="subcellular location">
    <subcellularLocation>
        <location>Synapse</location>
    </subcellularLocation>
    <subcellularLocation>
        <location>Secreted</location>
    </subcellularLocation>
    <subcellularLocation>
        <location evidence="1">Cell membrane</location>
        <topology evidence="1">Peripheral membrane protein</topology>
    </subcellularLocation>
</comment>
<comment type="miscellaneous">
    <text>Synapses usually contain asymmetric molecules of cholinesterase, with a collagen-like part disulfide-bonded to the catalytic part. A different, globular type of cholinesterase occurs on the outer surfaces of cell membranes, including those of erythrocytes.</text>
</comment>
<comment type="miscellaneous">
    <text>This is the catalytic subunit of an asymmetric or soluble form of ACHE.</text>
</comment>
<comment type="similarity">
    <text evidence="4">Belongs to the type-B carboxylesterase/lipase family.</text>
</comment>
<protein>
    <recommendedName>
        <fullName>Acetylcholinesterase</fullName>
        <shortName>AChE</shortName>
        <ecNumber>3.1.1.7</ecNumber>
    </recommendedName>
</protein>
<evidence type="ECO:0000250" key="1"/>
<evidence type="ECO:0000255" key="2"/>
<evidence type="ECO:0000255" key="3">
    <source>
        <dbReference type="PROSITE-ProRule" id="PRU10039"/>
    </source>
</evidence>
<evidence type="ECO:0000305" key="4"/>